<dbReference type="EMBL" id="S41204">
    <property type="protein sequence ID" value="AAB22718.1"/>
    <property type="molecule type" value="mRNA"/>
</dbReference>
<dbReference type="EMBL" id="AK028096">
    <property type="protein sequence ID" value="BAC25745.1"/>
    <property type="molecule type" value="mRNA"/>
</dbReference>
<dbReference type="EMBL" id="AK150244">
    <property type="protein sequence ID" value="BAE29408.1"/>
    <property type="molecule type" value="mRNA"/>
</dbReference>
<dbReference type="EMBL" id="AK147989">
    <property type="protein sequence ID" value="BAE28271.1"/>
    <property type="molecule type" value="mRNA"/>
</dbReference>
<dbReference type="EMBL" id="AK151360">
    <property type="protein sequence ID" value="BAE30335.1"/>
    <property type="molecule type" value="mRNA"/>
</dbReference>
<dbReference type="EMBL" id="AK159783">
    <property type="protein sequence ID" value="BAE35367.1"/>
    <property type="molecule type" value="mRNA"/>
</dbReference>
<dbReference type="EMBL" id="AK167592">
    <property type="protein sequence ID" value="BAE39650.1"/>
    <property type="molecule type" value="mRNA"/>
</dbReference>
<dbReference type="EMBL" id="AK165853">
    <property type="protein sequence ID" value="BAE38415.1"/>
    <property type="molecule type" value="mRNA"/>
</dbReference>
<dbReference type="EMBL" id="AK168213">
    <property type="protein sequence ID" value="BAE40171.1"/>
    <property type="molecule type" value="mRNA"/>
</dbReference>
<dbReference type="EMBL" id="AK168537">
    <property type="protein sequence ID" value="BAE40415.1"/>
    <property type="molecule type" value="mRNA"/>
</dbReference>
<dbReference type="EMBL" id="BC007148">
    <property type="protein sequence ID" value="AAH07148.1"/>
    <property type="molecule type" value="mRNA"/>
</dbReference>
<dbReference type="CCDS" id="CCDS35921.1">
    <molecule id="P40336-1"/>
</dbReference>
<dbReference type="CCDS" id="CCDS48579.1">
    <molecule id="P40336-2"/>
</dbReference>
<dbReference type="PIR" id="A44882">
    <property type="entry name" value="A44882"/>
</dbReference>
<dbReference type="PIR" id="B44882">
    <property type="entry name" value="B44882"/>
</dbReference>
<dbReference type="RefSeq" id="NP_001106826.1">
    <molecule id="P40336-2"/>
    <property type="nucleotide sequence ID" value="NM_001113355.1"/>
</dbReference>
<dbReference type="RefSeq" id="NP_598433.1">
    <molecule id="P40336-1"/>
    <property type="nucleotide sequence ID" value="NM_133672.3"/>
</dbReference>
<dbReference type="PDB" id="4P2A">
    <property type="method" value="X-ray"/>
    <property type="resolution" value="2.70 A"/>
    <property type="chains" value="A=9-327"/>
</dbReference>
<dbReference type="PDB" id="6VAC">
    <property type="method" value="EM"/>
    <property type="resolution" value="5.70 A"/>
    <property type="chains" value="B=1-327"/>
</dbReference>
<dbReference type="PDB" id="7U6F">
    <property type="method" value="EM"/>
    <property type="resolution" value="4.90 A"/>
    <property type="chains" value="B3=1-327"/>
</dbReference>
<dbReference type="PDBsum" id="4P2A"/>
<dbReference type="PDBsum" id="6VAC"/>
<dbReference type="PDBsum" id="7U6F"/>
<dbReference type="EMDB" id="EMD-21136"/>
<dbReference type="EMDB" id="EMD-24963"/>
<dbReference type="EMDB" id="EMD-24964"/>
<dbReference type="EMDB" id="EMD-26340"/>
<dbReference type="EMDB" id="EMD-26341"/>
<dbReference type="EMDB" id="EMD-26342"/>
<dbReference type="EMDB" id="EMD-26343"/>
<dbReference type="EMDB" id="EMD-26345"/>
<dbReference type="SMR" id="P40336"/>
<dbReference type="BioGRID" id="206007">
    <property type="interactions" value="23"/>
</dbReference>
<dbReference type="CORUM" id="P40336"/>
<dbReference type="DIP" id="DIP-32041N"/>
<dbReference type="FunCoup" id="P40336">
    <property type="interactions" value="3728"/>
</dbReference>
<dbReference type="IntAct" id="P40336">
    <property type="interactions" value="4"/>
</dbReference>
<dbReference type="MINT" id="P40336"/>
<dbReference type="STRING" id="10090.ENSMUSP00000090130"/>
<dbReference type="GlyGen" id="P40336">
    <property type="glycosylation" value="2 sites, 1 O-linked glycan (1 site)"/>
</dbReference>
<dbReference type="iPTMnet" id="P40336"/>
<dbReference type="PhosphoSitePlus" id="P40336"/>
<dbReference type="SwissPalm" id="P40336"/>
<dbReference type="jPOST" id="P40336"/>
<dbReference type="PaxDb" id="10090-ENSMUSP00000090130"/>
<dbReference type="PeptideAtlas" id="P40336"/>
<dbReference type="ProteomicsDB" id="297967">
    <molecule id="P40336-1"/>
</dbReference>
<dbReference type="ProteomicsDB" id="297968">
    <molecule id="P40336-2"/>
</dbReference>
<dbReference type="Pumba" id="P40336"/>
<dbReference type="Antibodypedia" id="28695">
    <property type="antibodies" value="231 antibodies from 35 providers"/>
</dbReference>
<dbReference type="DNASU" id="30930"/>
<dbReference type="Ensembl" id="ENSMUST00000092473.5">
    <molecule id="P40336-2"/>
    <property type="protein sequence ID" value="ENSMUSP00000090130.4"/>
    <property type="gene ID" value="ENSMUSG00000020078.17"/>
</dbReference>
<dbReference type="Ensembl" id="ENSMUST00000105447.11">
    <molecule id="P40336-1"/>
    <property type="protein sequence ID" value="ENSMUSP00000101087.4"/>
    <property type="gene ID" value="ENSMUSG00000020078.17"/>
</dbReference>
<dbReference type="GeneID" id="30930"/>
<dbReference type="KEGG" id="mmu:30930"/>
<dbReference type="UCSC" id="uc007fhf.2">
    <molecule id="P40336-2"/>
    <property type="organism name" value="mouse"/>
</dbReference>
<dbReference type="UCSC" id="uc007fhg.2">
    <molecule id="P40336-1"/>
    <property type="organism name" value="mouse"/>
</dbReference>
<dbReference type="AGR" id="MGI:1353654"/>
<dbReference type="CTD" id="9559"/>
<dbReference type="MGI" id="MGI:1353654">
    <property type="gene designation" value="Vps26a"/>
</dbReference>
<dbReference type="VEuPathDB" id="HostDB:ENSMUSG00000020078"/>
<dbReference type="eggNOG" id="KOG3063">
    <property type="taxonomic scope" value="Eukaryota"/>
</dbReference>
<dbReference type="GeneTree" id="ENSGT00950000183064"/>
<dbReference type="HOGENOM" id="CLU_031077_0_0_1"/>
<dbReference type="InParanoid" id="P40336"/>
<dbReference type="OMA" id="AGKVCIE"/>
<dbReference type="OrthoDB" id="10211at9989"/>
<dbReference type="PhylomeDB" id="P40336"/>
<dbReference type="TreeFam" id="TF300907"/>
<dbReference type="Reactome" id="R-MMU-3238698">
    <property type="pathway name" value="WNT ligand biogenesis and trafficking"/>
</dbReference>
<dbReference type="BioGRID-ORCS" id="30930">
    <property type="hits" value="6 hits in 78 CRISPR screens"/>
</dbReference>
<dbReference type="CD-CODE" id="DE1E139C">
    <property type="entry name" value="Chromatoid body"/>
</dbReference>
<dbReference type="ChiTaRS" id="Vps26a">
    <property type="organism name" value="mouse"/>
</dbReference>
<dbReference type="EvolutionaryTrace" id="P40336"/>
<dbReference type="PRO" id="PR:P40336"/>
<dbReference type="Proteomes" id="UP000000589">
    <property type="component" value="Chromosome 10"/>
</dbReference>
<dbReference type="RNAct" id="P40336">
    <property type="molecule type" value="protein"/>
</dbReference>
<dbReference type="Bgee" id="ENSMUSG00000020078">
    <property type="expression patterns" value="Expressed in spermatocyte and 276 other cell types or tissues"/>
</dbReference>
<dbReference type="ExpressionAtlas" id="P40336">
    <property type="expression patterns" value="baseline and differential"/>
</dbReference>
<dbReference type="GO" id="GO:0005829">
    <property type="term" value="C:cytosol"/>
    <property type="evidence" value="ECO:0007669"/>
    <property type="project" value="GOC"/>
</dbReference>
<dbReference type="GO" id="GO:0005769">
    <property type="term" value="C:early endosome"/>
    <property type="evidence" value="ECO:0000314"/>
    <property type="project" value="UniProtKB"/>
</dbReference>
<dbReference type="GO" id="GO:0005768">
    <property type="term" value="C:endosome"/>
    <property type="evidence" value="ECO:0000314"/>
    <property type="project" value="MGI"/>
</dbReference>
<dbReference type="GO" id="GO:0010008">
    <property type="term" value="C:endosome membrane"/>
    <property type="evidence" value="ECO:0007669"/>
    <property type="project" value="UniProtKB-SubCell"/>
</dbReference>
<dbReference type="GO" id="GO:0005764">
    <property type="term" value="C:lysosome"/>
    <property type="evidence" value="ECO:0007669"/>
    <property type="project" value="Ensembl"/>
</dbReference>
<dbReference type="GO" id="GO:0030904">
    <property type="term" value="C:retromer complex"/>
    <property type="evidence" value="ECO:0000314"/>
    <property type="project" value="UniProtKB"/>
</dbReference>
<dbReference type="GO" id="GO:0030906">
    <property type="term" value="C:retromer, cargo-selective complex"/>
    <property type="evidence" value="ECO:0007669"/>
    <property type="project" value="Ensembl"/>
</dbReference>
<dbReference type="GO" id="GO:0097422">
    <property type="term" value="C:tubular endosome"/>
    <property type="evidence" value="ECO:0000250"/>
    <property type="project" value="UniProtKB"/>
</dbReference>
<dbReference type="GO" id="GO:0031982">
    <property type="term" value="C:vesicle"/>
    <property type="evidence" value="ECO:0000250"/>
    <property type="project" value="UniProtKB"/>
</dbReference>
<dbReference type="GO" id="GO:0032456">
    <property type="term" value="P:endocytic recycling"/>
    <property type="evidence" value="ECO:0000250"/>
    <property type="project" value="UniProtKB"/>
</dbReference>
<dbReference type="GO" id="GO:0006886">
    <property type="term" value="P:intracellular protein transport"/>
    <property type="evidence" value="ECO:0007669"/>
    <property type="project" value="InterPro"/>
</dbReference>
<dbReference type="GO" id="GO:0042147">
    <property type="term" value="P:retrograde transport, endosome to Golgi"/>
    <property type="evidence" value="ECO:0000314"/>
    <property type="project" value="MGI"/>
</dbReference>
<dbReference type="FunFam" id="2.60.40.640:FF:000001">
    <property type="entry name" value="Vacuolar protein sorting-associated protein 26A"/>
    <property type="match status" value="1"/>
</dbReference>
<dbReference type="FunFam" id="2.60.40.640:FF:000002">
    <property type="entry name" value="Vacuolar protein sorting-associated protein 26A"/>
    <property type="match status" value="1"/>
</dbReference>
<dbReference type="Gene3D" id="2.60.40.640">
    <property type="match status" value="2"/>
</dbReference>
<dbReference type="InterPro" id="IPR014752">
    <property type="entry name" value="Arrestin-like_C"/>
</dbReference>
<dbReference type="InterPro" id="IPR028934">
    <property type="entry name" value="Vps26-related"/>
</dbReference>
<dbReference type="PANTHER" id="PTHR12233">
    <property type="entry name" value="VACUOLAR PROTEIN SORTING 26 RELATED"/>
    <property type="match status" value="1"/>
</dbReference>
<dbReference type="Pfam" id="PF03643">
    <property type="entry name" value="Vps26"/>
    <property type="match status" value="1"/>
</dbReference>
<proteinExistence type="evidence at protein level"/>
<reference key="1">
    <citation type="journal article" date="1992" name="Development">
        <title>Identification and characterization of a novel, evolutionarily conserved gene disrupted by the murine H beta 58 embryonic lethal transgene insertion.</title>
        <authorList>
            <person name="Lee J.J."/>
            <person name="Radice G."/>
            <person name="Perkins C.P."/>
            <person name="Costantini F."/>
        </authorList>
    </citation>
    <scope>NUCLEOTIDE SEQUENCE [MRNA] (ISOFORM 1)</scope>
</reference>
<reference key="2">
    <citation type="journal article" date="2005" name="Science">
        <title>The transcriptional landscape of the mammalian genome.</title>
        <authorList>
            <person name="Carninci P."/>
            <person name="Kasukawa T."/>
            <person name="Katayama S."/>
            <person name="Gough J."/>
            <person name="Frith M.C."/>
            <person name="Maeda N."/>
            <person name="Oyama R."/>
            <person name="Ravasi T."/>
            <person name="Lenhard B."/>
            <person name="Wells C."/>
            <person name="Kodzius R."/>
            <person name="Shimokawa K."/>
            <person name="Bajic V.B."/>
            <person name="Brenner S.E."/>
            <person name="Batalov S."/>
            <person name="Forrest A.R."/>
            <person name="Zavolan M."/>
            <person name="Davis M.J."/>
            <person name="Wilming L.G."/>
            <person name="Aidinis V."/>
            <person name="Allen J.E."/>
            <person name="Ambesi-Impiombato A."/>
            <person name="Apweiler R."/>
            <person name="Aturaliya R.N."/>
            <person name="Bailey T.L."/>
            <person name="Bansal M."/>
            <person name="Baxter L."/>
            <person name="Beisel K.W."/>
            <person name="Bersano T."/>
            <person name="Bono H."/>
            <person name="Chalk A.M."/>
            <person name="Chiu K.P."/>
            <person name="Choudhary V."/>
            <person name="Christoffels A."/>
            <person name="Clutterbuck D.R."/>
            <person name="Crowe M.L."/>
            <person name="Dalla E."/>
            <person name="Dalrymple B.P."/>
            <person name="de Bono B."/>
            <person name="Della Gatta G."/>
            <person name="di Bernardo D."/>
            <person name="Down T."/>
            <person name="Engstrom P."/>
            <person name="Fagiolini M."/>
            <person name="Faulkner G."/>
            <person name="Fletcher C.F."/>
            <person name="Fukushima T."/>
            <person name="Furuno M."/>
            <person name="Futaki S."/>
            <person name="Gariboldi M."/>
            <person name="Georgii-Hemming P."/>
            <person name="Gingeras T.R."/>
            <person name="Gojobori T."/>
            <person name="Green R.E."/>
            <person name="Gustincich S."/>
            <person name="Harbers M."/>
            <person name="Hayashi Y."/>
            <person name="Hensch T.K."/>
            <person name="Hirokawa N."/>
            <person name="Hill D."/>
            <person name="Huminiecki L."/>
            <person name="Iacono M."/>
            <person name="Ikeo K."/>
            <person name="Iwama A."/>
            <person name="Ishikawa T."/>
            <person name="Jakt M."/>
            <person name="Kanapin A."/>
            <person name="Katoh M."/>
            <person name="Kawasawa Y."/>
            <person name="Kelso J."/>
            <person name="Kitamura H."/>
            <person name="Kitano H."/>
            <person name="Kollias G."/>
            <person name="Krishnan S.P."/>
            <person name="Kruger A."/>
            <person name="Kummerfeld S.K."/>
            <person name="Kurochkin I.V."/>
            <person name="Lareau L.F."/>
            <person name="Lazarevic D."/>
            <person name="Lipovich L."/>
            <person name="Liu J."/>
            <person name="Liuni S."/>
            <person name="McWilliam S."/>
            <person name="Madan Babu M."/>
            <person name="Madera M."/>
            <person name="Marchionni L."/>
            <person name="Matsuda H."/>
            <person name="Matsuzawa S."/>
            <person name="Miki H."/>
            <person name="Mignone F."/>
            <person name="Miyake S."/>
            <person name="Morris K."/>
            <person name="Mottagui-Tabar S."/>
            <person name="Mulder N."/>
            <person name="Nakano N."/>
            <person name="Nakauchi H."/>
            <person name="Ng P."/>
            <person name="Nilsson R."/>
            <person name="Nishiguchi S."/>
            <person name="Nishikawa S."/>
            <person name="Nori F."/>
            <person name="Ohara O."/>
            <person name="Okazaki Y."/>
            <person name="Orlando V."/>
            <person name="Pang K.C."/>
            <person name="Pavan W.J."/>
            <person name="Pavesi G."/>
            <person name="Pesole G."/>
            <person name="Petrovsky N."/>
            <person name="Piazza S."/>
            <person name="Reed J."/>
            <person name="Reid J.F."/>
            <person name="Ring B.Z."/>
            <person name="Ringwald M."/>
            <person name="Rost B."/>
            <person name="Ruan Y."/>
            <person name="Salzberg S.L."/>
            <person name="Sandelin A."/>
            <person name="Schneider C."/>
            <person name="Schoenbach C."/>
            <person name="Sekiguchi K."/>
            <person name="Semple C.A."/>
            <person name="Seno S."/>
            <person name="Sessa L."/>
            <person name="Sheng Y."/>
            <person name="Shibata Y."/>
            <person name="Shimada H."/>
            <person name="Shimada K."/>
            <person name="Silva D."/>
            <person name="Sinclair B."/>
            <person name="Sperling S."/>
            <person name="Stupka E."/>
            <person name="Sugiura K."/>
            <person name="Sultana R."/>
            <person name="Takenaka Y."/>
            <person name="Taki K."/>
            <person name="Tammoja K."/>
            <person name="Tan S.L."/>
            <person name="Tang S."/>
            <person name="Taylor M.S."/>
            <person name="Tegner J."/>
            <person name="Teichmann S.A."/>
            <person name="Ueda H.R."/>
            <person name="van Nimwegen E."/>
            <person name="Verardo R."/>
            <person name="Wei C.L."/>
            <person name="Yagi K."/>
            <person name="Yamanishi H."/>
            <person name="Zabarovsky E."/>
            <person name="Zhu S."/>
            <person name="Zimmer A."/>
            <person name="Hide W."/>
            <person name="Bult C."/>
            <person name="Grimmond S.M."/>
            <person name="Teasdale R.D."/>
            <person name="Liu E.T."/>
            <person name="Brusic V."/>
            <person name="Quackenbush J."/>
            <person name="Wahlestedt C."/>
            <person name="Mattick J.S."/>
            <person name="Hume D.A."/>
            <person name="Kai C."/>
            <person name="Sasaki D."/>
            <person name="Tomaru Y."/>
            <person name="Fukuda S."/>
            <person name="Kanamori-Katayama M."/>
            <person name="Suzuki M."/>
            <person name="Aoki J."/>
            <person name="Arakawa T."/>
            <person name="Iida J."/>
            <person name="Imamura K."/>
            <person name="Itoh M."/>
            <person name="Kato T."/>
            <person name="Kawaji H."/>
            <person name="Kawagashira N."/>
            <person name="Kawashima T."/>
            <person name="Kojima M."/>
            <person name="Kondo S."/>
            <person name="Konno H."/>
            <person name="Nakano K."/>
            <person name="Ninomiya N."/>
            <person name="Nishio T."/>
            <person name="Okada M."/>
            <person name="Plessy C."/>
            <person name="Shibata K."/>
            <person name="Shiraki T."/>
            <person name="Suzuki S."/>
            <person name="Tagami M."/>
            <person name="Waki K."/>
            <person name="Watahiki A."/>
            <person name="Okamura-Oho Y."/>
            <person name="Suzuki H."/>
            <person name="Kawai J."/>
            <person name="Hayashizaki Y."/>
        </authorList>
    </citation>
    <scope>NUCLEOTIDE SEQUENCE [LARGE SCALE MRNA] (ISOFORM 2)</scope>
    <source>
        <strain>C57BL/6J</strain>
        <strain>DBA/2J</strain>
        <tissue>Amnion</tissue>
        <tissue>Bone marrow</tissue>
        <tissue>Lung</tissue>
        <tissue>Placenta</tissue>
        <tissue>Testis</tissue>
    </source>
</reference>
<reference key="3">
    <citation type="journal article" date="2004" name="Genome Res.">
        <title>The status, quality, and expansion of the NIH full-length cDNA project: the Mammalian Gene Collection (MGC).</title>
        <authorList>
            <consortium name="The MGC Project Team"/>
        </authorList>
    </citation>
    <scope>NUCLEOTIDE SEQUENCE [LARGE SCALE MRNA] (ISOFORM 1)</scope>
    <source>
        <strain>C57BL/6J</strain>
        <tissue>Mammary tumor</tissue>
    </source>
</reference>
<reference key="4">
    <citation type="journal article" date="2004" name="J. Cell Biol.">
        <title>Cargo-selective endosomal sorting for retrieval to the Golgi requires retromer.</title>
        <authorList>
            <person name="Seaman M.N.J."/>
        </authorList>
    </citation>
    <scope>FUNCTION</scope>
    <scope>SUBCELLULAR LOCATION</scope>
</reference>
<reference key="5">
    <citation type="journal article" date="2008" name="Traffic">
        <title>Structure of Vps26B and mapping of its interaction with the retromer protein complex.</title>
        <authorList>
            <person name="Collins B.M."/>
            <person name="Norwood S.J."/>
            <person name="Kerr M.C."/>
            <person name="Mahony D."/>
            <person name="Seaman M.N."/>
            <person name="Teasdale R.D."/>
            <person name="Owen D.J."/>
        </authorList>
    </citation>
    <scope>SUBUNIT</scope>
    <scope>MUTAGENESIS OF 235-ILE-MET-236</scope>
    <scope>SUBCELLULAR LOCATION</scope>
</reference>
<reference key="6">
    <citation type="journal article" date="2010" name="Cell">
        <title>A tissue-specific atlas of mouse protein phosphorylation and expression.</title>
        <authorList>
            <person name="Huttlin E.L."/>
            <person name="Jedrychowski M.P."/>
            <person name="Elias J.E."/>
            <person name="Goswami T."/>
            <person name="Rad R."/>
            <person name="Beausoleil S.A."/>
            <person name="Villen J."/>
            <person name="Haas W."/>
            <person name="Sowa M.E."/>
            <person name="Gygi S.P."/>
        </authorList>
    </citation>
    <scope>IDENTIFICATION BY MASS SPECTROMETRY [LARGE SCALE ANALYSIS]</scope>
    <source>
        <tissue>Brain</tissue>
        <tissue>Brown adipose tissue</tissue>
        <tissue>Heart</tissue>
        <tissue>Kidney</tissue>
        <tissue>Liver</tissue>
        <tissue>Lung</tissue>
        <tissue>Pancreas</tissue>
        <tissue>Spleen</tissue>
        <tissue>Testis</tissue>
    </source>
</reference>
<reference key="7">
    <citation type="journal article" date="2011" name="Traffic">
        <title>Assembly and solution structure of the core retromer protein complex.</title>
        <authorList>
            <person name="Norwood S.J."/>
            <person name="Shaw D.J."/>
            <person name="Cowieson N.P."/>
            <person name="Owen D.J."/>
            <person name="Teasdale R.D."/>
            <person name="Collins B.M."/>
        </authorList>
    </citation>
    <scope>SUBUNIT</scope>
</reference>
<reference key="8">
    <citation type="journal article" date="2011" name="Traffic">
        <title>Vps26A and Vps26B subunits define distinct retromer complexes.</title>
        <authorList>
            <person name="Bugarcic A."/>
            <person name="Zhe Y."/>
            <person name="Kerr M.C."/>
            <person name="Griffin J."/>
            <person name="Collins B.M."/>
            <person name="Teasdale R.D."/>
        </authorList>
    </citation>
    <scope>SUBCELLULAR LOCATION</scope>
</reference>
<reference key="9">
    <citation type="journal article" date="2014" name="Proc. Natl. Acad. Sci. U.S.A.">
        <title>A unique PDZ domain and arrestin-like fold interaction reveals mechanistic details of endocytic recycling by SNX27-retromer.</title>
        <authorList>
            <person name="Gallon M."/>
            <person name="Clairfeuille T."/>
            <person name="Steinberg F."/>
            <person name="Mas C."/>
            <person name="Ghai R."/>
            <person name="Sessions R.B."/>
            <person name="Teasdale R.D."/>
            <person name="Collins B.M."/>
            <person name="Cullen P.J."/>
        </authorList>
    </citation>
    <scope>X-RAY CRYSTALLOGRAPHY (2.7 ANGSTROMS) OF 9-327</scope>
    <scope>FUNCTION</scope>
    <scope>INTERACTION WITH SNX27</scope>
    <scope>MUTAGENESIS OF ASP-44 AND LEU-154</scope>
</reference>
<accession>P40336</accession>
<accession>Q3TGY3</accession>
<accession>Q3THM5</accession>
<accession>Q3TW99</accession>
<accession>Q3UD54</accession>
<accession>Q8C1E9</accession>
<name>VP26A_MOUSE</name>
<feature type="chain" id="PRO_0000073008" description="Vacuolar protein sorting-associated protein 26A">
    <location>
        <begin position="1"/>
        <end position="327"/>
    </location>
</feature>
<feature type="region of interest" description="Disordered" evidence="2">
    <location>
        <begin position="306"/>
        <end position="327"/>
    </location>
</feature>
<feature type="compositionally biased region" description="Polar residues" evidence="2">
    <location>
        <begin position="316"/>
        <end position="327"/>
    </location>
</feature>
<feature type="modified residue" description="Phosphoserine" evidence="1">
    <location>
        <position position="315"/>
    </location>
</feature>
<feature type="splice variant" id="VSP_019926" description="In isoform 2." evidence="8">
    <original>M</original>
    <variation>MSEPLPAFLDRLWGPWLGTRSPPSRSSAASPSK</variation>
    <location>
        <position position="1"/>
    </location>
</feature>
<feature type="mutagenesis site" description="Decreases interaction with SNX27." evidence="7">
    <original>D</original>
    <variation>A</variation>
    <location>
        <position position="44"/>
    </location>
</feature>
<feature type="mutagenesis site" description="Decreases interaction with SNX27." evidence="7">
    <original>L</original>
    <variation>A</variation>
    <location>
        <position position="154"/>
    </location>
</feature>
<feature type="mutagenesis site" description="Disrupts interaction with VPS35:VPS29 dimer; no endosomal localization.">
    <original>IM</original>
    <variation>DN</variation>
    <location>
        <begin position="235"/>
        <end position="236"/>
    </location>
</feature>
<feature type="sequence conflict" description="In Ref. 2; BAC25745." evidence="10" ref="2">
    <original>E</original>
    <variation>Q</variation>
    <location>
        <position position="37"/>
    </location>
</feature>
<feature type="sequence conflict" description="In Ref. 2; BAE35367." evidence="10" ref="2">
    <original>E</original>
    <variation>G</variation>
    <location>
        <position position="71"/>
    </location>
</feature>
<feature type="sequence conflict" description="In Ref. 2; BAE40171." evidence="10" ref="2">
    <original>F</original>
    <variation>L</variation>
    <location>
        <position position="79"/>
    </location>
</feature>
<feature type="sequence conflict" description="In Ref. 2; BAE40415." evidence="10" ref="2">
    <original>K</original>
    <variation>R</variation>
    <location>
        <position position="188"/>
    </location>
</feature>
<feature type="strand" evidence="11">
    <location>
        <begin position="11"/>
        <end position="20"/>
    </location>
</feature>
<feature type="turn" evidence="11">
    <location>
        <begin position="21"/>
        <end position="23"/>
    </location>
</feature>
<feature type="strand" evidence="11">
    <location>
        <begin position="26"/>
        <end position="30"/>
    </location>
</feature>
<feature type="strand" evidence="11">
    <location>
        <begin position="36"/>
        <end position="42"/>
    </location>
</feature>
<feature type="strand" evidence="11">
    <location>
        <begin position="48"/>
        <end position="58"/>
    </location>
</feature>
<feature type="strand" evidence="11">
    <location>
        <begin position="63"/>
        <end position="77"/>
    </location>
</feature>
<feature type="strand" evidence="11">
    <location>
        <begin position="79"/>
        <end position="83"/>
    </location>
</feature>
<feature type="strand" evidence="11">
    <location>
        <begin position="86"/>
        <end position="96"/>
    </location>
</feature>
<feature type="strand" evidence="11">
    <location>
        <begin position="98"/>
        <end position="103"/>
    </location>
</feature>
<feature type="strand" evidence="11">
    <location>
        <begin position="105"/>
        <end position="111"/>
    </location>
</feature>
<feature type="strand" evidence="11">
    <location>
        <begin position="127"/>
        <end position="137"/>
    </location>
</feature>
<feature type="strand" evidence="11">
    <location>
        <begin position="143"/>
        <end position="151"/>
    </location>
</feature>
<feature type="strand" evidence="11">
    <location>
        <begin position="154"/>
        <end position="156"/>
    </location>
</feature>
<feature type="strand" evidence="11">
    <location>
        <begin position="164"/>
        <end position="169"/>
    </location>
</feature>
<feature type="strand" evidence="11">
    <location>
        <begin position="171"/>
        <end position="181"/>
    </location>
</feature>
<feature type="strand" evidence="11">
    <location>
        <begin position="183"/>
        <end position="186"/>
    </location>
</feature>
<feature type="strand" evidence="11">
    <location>
        <begin position="190"/>
        <end position="202"/>
    </location>
</feature>
<feature type="strand" evidence="11">
    <location>
        <begin position="204"/>
        <end position="216"/>
    </location>
</feature>
<feature type="strand" evidence="11">
    <location>
        <begin position="225"/>
        <end position="238"/>
    </location>
</feature>
<feature type="strand" evidence="11">
    <location>
        <begin position="246"/>
        <end position="251"/>
    </location>
</feature>
<feature type="helix" evidence="11">
    <location>
        <begin position="252"/>
        <end position="254"/>
    </location>
</feature>
<feature type="strand" evidence="11">
    <location>
        <begin position="261"/>
        <end position="264"/>
    </location>
</feature>
<feature type="turn" evidence="11">
    <location>
        <begin position="265"/>
        <end position="267"/>
    </location>
</feature>
<feature type="strand" evidence="11">
    <location>
        <begin position="268"/>
        <end position="280"/>
    </location>
</feature>
<feature type="strand" evidence="11">
    <location>
        <begin position="285"/>
        <end position="297"/>
    </location>
</feature>
<organism>
    <name type="scientific">Mus musculus</name>
    <name type="common">Mouse</name>
    <dbReference type="NCBI Taxonomy" id="10090"/>
    <lineage>
        <taxon>Eukaryota</taxon>
        <taxon>Metazoa</taxon>
        <taxon>Chordata</taxon>
        <taxon>Craniata</taxon>
        <taxon>Vertebrata</taxon>
        <taxon>Euteleostomi</taxon>
        <taxon>Mammalia</taxon>
        <taxon>Eutheria</taxon>
        <taxon>Euarchontoglires</taxon>
        <taxon>Glires</taxon>
        <taxon>Rodentia</taxon>
        <taxon>Myomorpha</taxon>
        <taxon>Muroidea</taxon>
        <taxon>Muridae</taxon>
        <taxon>Murinae</taxon>
        <taxon>Mus</taxon>
        <taxon>Mus</taxon>
    </lineage>
</organism>
<sequence length="327" mass="38114">MSFLGGFFGPICEIDVALNDGETRKMAEMKTEDGKVEKHYLFYDGESVSGKVNLAFKQPGKRLEHQGIRIEFVGQIELFNDKSNTHEFVNLVKELALPGELTQSRSYDFEFMQVEKPYESYIGANVRLRYFLKVTIVRRLTDLVKEYDLIVHQLATYPDVNNSIKMEVGIEDCLHIEFEYNKSKYHLKDVIVGKIYFLLVRIKIQHMELQLIKKEITGIGPSTTTETETIAKYEIMDGAPVKGESIPIRLFLAGYDPTPTMRDVNKKFSVRYFLNLVLVDEEDRRYFKQQEIILWRKAPEKLRKQRTNFHQRFESPDSQASAEQPEM</sequence>
<gene>
    <name type="primary">Vps26a</name>
    <name type="synonym">Vps26</name>
</gene>
<protein>
    <recommendedName>
        <fullName>Vacuolar protein sorting-associated protein 26A</fullName>
    </recommendedName>
    <alternativeName>
        <fullName>H&lt;beta&gt;58 protein</fullName>
        <shortName>H beta 58</shortName>
    </alternativeName>
    <alternativeName>
        <fullName>Vesicle protein sorting 26A</fullName>
        <shortName>mVPS26</shortName>
    </alternativeName>
</protein>
<keyword id="KW-0002">3D-structure</keyword>
<keyword id="KW-0025">Alternative splicing</keyword>
<keyword id="KW-0963">Cytoplasm</keyword>
<keyword id="KW-0967">Endosome</keyword>
<keyword id="KW-0472">Membrane</keyword>
<keyword id="KW-0597">Phosphoprotein</keyword>
<keyword id="KW-0653">Protein transport</keyword>
<keyword id="KW-1185">Reference proteome</keyword>
<keyword id="KW-0813">Transport</keyword>
<evidence type="ECO:0000250" key="1">
    <source>
        <dbReference type="UniProtKB" id="O75436"/>
    </source>
</evidence>
<evidence type="ECO:0000256" key="2">
    <source>
        <dbReference type="SAM" id="MobiDB-lite"/>
    </source>
</evidence>
<evidence type="ECO:0000269" key="3">
    <source>
    </source>
</evidence>
<evidence type="ECO:0000269" key="4">
    <source>
    </source>
</evidence>
<evidence type="ECO:0000269" key="5">
    <source>
    </source>
</evidence>
<evidence type="ECO:0000269" key="6">
    <source>
    </source>
</evidence>
<evidence type="ECO:0000269" key="7">
    <source>
    </source>
</evidence>
<evidence type="ECO:0000303" key="8">
    <source>
    </source>
</evidence>
<evidence type="ECO:0000303" key="9">
    <source>
    </source>
</evidence>
<evidence type="ECO:0000305" key="10"/>
<evidence type="ECO:0007829" key="11">
    <source>
        <dbReference type="PDB" id="4P2A"/>
    </source>
</evidence>
<comment type="function">
    <text evidence="1 3 7">Acts as a component of the retromer cargo-selective complex (CSC). The CSC is believed to be the core functional component of retromer or respective retromer complex variants acting to prevent missorting of selected transmembrane cargo proteins into the lysosomal degradation pathway. The recruitment of the CSC to the endosomal membrane involves RAB7A and SNX3. The SNX-BAR retromer mediates retrograde transport of cargo proteins from endosomes to the trans-Golgi network (TGN) and is involved in endosome-to-plasma membrane transport for cargo protein recycling. The SNX3-retromer mediates the retrograde endosome-to-TGN transport of WLS distinct from the SNX-BAR retromer pathway. The SNX27-retromer is believed to be involved in endosome-to-plasma membrane trafficking and recycling of a broad spectrum of cargo proteins. The CSC complex seems to act as recruitment hub for other proteins, such as the WASH complex and TBC1D5 (By similarity). Required for retrograde transport of lysosomal enzyme receptor IGF2R (PubMed:15078902). Required to regulate transcytosis of the polymeric immunoglobulin receptor (pIgR-pIgA). Required for the endosomal localization of WASHC2 (indicative for the WASH complex). Required for the endosomal localization of TBC1D5. Mediates retromer cargo recognition of SORL1 and is involved in trafficking of SORL1 implicated in sorting and processing of APP (By similarity). Involved in retromer-independent lysosomal sorting of F2R. Involved in recycling of ADRB2 (By similarity). Acts redundantly with VSP26B in SNX-27 mediated endocytic recycling of SLC2A1/GLUT1. Enhances the affinity of SNX27 for PDZ-binding motifs in cargo proteins (PubMed:25136126).</text>
</comment>
<comment type="subunit">
    <text evidence="1 4 5 7 9">Component of the heterotrimeric retromer cargo-selective complex (CSC), also described as vacuolar protein sorting subcomplex (VPS), formed by VPS26 (VPS26A or VPS26B), VPS29 and VPS35 (PubMed:18088321, PubMed:20875039). The CSC has a highly elongated structure with VPS26 and VPS29 binding independently at opposite distal ends of VPS35 as central platform (Probable). The CSC is believed to associate with variable sorting nexins to form functionally distinct retromer complex variants. The originally described retromer complex (also called SNX-BAR retromer) is a pentamer containing the CSC and a heterodimeric membrane-deforming subcomplex formed between SNX1 or SNX2 and SNX5 or SNX6 (also called SNX-BAR subcomplex); the respective CSC and SNX-BAR subcomplexes associate with low affinity. The CSC associates with SNX3 to form a SNX3-retromer complex. The CSC associates with SNX27, the WASH complex and the SNX-BAR subcomplex to form the SNX27-retromer complex (By similarity). Interacts with VPS29, VPS35, SNX27 (PubMed:18088321, PubMed:20875039, PubMed:25136126). Interacts with SNX1, SNX2, SNX5, SNX6, SNX3, RAB7A, ECPAS, EHD1, WASHC5, SORL1 (By similarity).</text>
</comment>
<comment type="interaction">
    <interactant intactId="EBI-15553779">
        <id>P40336-1</id>
    </interactant>
    <interactant intactId="EBI-775825">
        <id>Q9EQH3</id>
        <label>Vps35</label>
    </interactant>
    <organismsDiffer>false</organismsDiffer>
    <experiments>2</experiments>
</comment>
<comment type="subcellular location">
    <subcellularLocation>
        <location evidence="3">Cytoplasm</location>
    </subcellularLocation>
    <subcellularLocation>
        <location evidence="3">Endosome membrane</location>
        <topology evidence="3">Peripheral membrane protein</topology>
    </subcellularLocation>
    <subcellularLocation>
        <location evidence="4 6">Early endosome</location>
    </subcellularLocation>
    <text evidence="6">Predominantly found in early not late endosomes.</text>
</comment>
<comment type="alternative products">
    <event type="alternative splicing"/>
    <isoform>
        <id>P40336-1</id>
        <name>1</name>
        <sequence type="displayed"/>
    </isoform>
    <isoform>
        <id>P40336-2</id>
        <name>2</name>
        <sequence type="described" ref="VSP_019926"/>
    </isoform>
</comment>
<comment type="similarity">
    <text evidence="10">Belongs to the VPS26 family.</text>
</comment>